<dbReference type="SMR" id="P20900"/>
<dbReference type="GO" id="GO:0009538">
    <property type="term" value="C:photosystem I reaction center"/>
    <property type="evidence" value="ECO:0007669"/>
    <property type="project" value="InterPro"/>
</dbReference>
<dbReference type="GO" id="GO:0031676">
    <property type="term" value="C:plasma membrane-derived thylakoid membrane"/>
    <property type="evidence" value="ECO:0007669"/>
    <property type="project" value="UniProtKB-SubCell"/>
</dbReference>
<dbReference type="GO" id="GO:0015979">
    <property type="term" value="P:photosynthesis"/>
    <property type="evidence" value="ECO:0007669"/>
    <property type="project" value="UniProtKB-KW"/>
</dbReference>
<dbReference type="Gene3D" id="2.30.30.50">
    <property type="match status" value="1"/>
</dbReference>
<dbReference type="InterPro" id="IPR008990">
    <property type="entry name" value="Elect_transpt_acc-like_dom_sf"/>
</dbReference>
<dbReference type="InterPro" id="IPR003375">
    <property type="entry name" value="PSI_PsaE"/>
</dbReference>
<dbReference type="Pfam" id="PF02427">
    <property type="entry name" value="PSI_PsaE"/>
    <property type="match status" value="1"/>
</dbReference>
<dbReference type="SUPFAM" id="SSF50090">
    <property type="entry name" value="Electron transport accessory proteins"/>
    <property type="match status" value="1"/>
</dbReference>
<reference key="1">
    <citation type="journal article" date="1989" name="FEBS Lett.">
        <title>Identification of photosystem I components from the cyanobacterium, Synechococcus vulcanus by N-terminal sequencing.</title>
        <authorList>
            <person name="Koike H."/>
            <person name="Ikeuchi M."/>
            <person name="Hiyama T."/>
            <person name="Inoue Y."/>
        </authorList>
    </citation>
    <scope>PROTEIN SEQUENCE</scope>
</reference>
<accession>P20900</accession>
<proteinExistence type="evidence at protein level"/>
<sequence length="26" mass="2911">MVQRGSKVKILRPESYVYNEVGTVAS</sequence>
<evidence type="ECO:0000250" key="1"/>
<evidence type="ECO:0000305" key="2"/>
<organism>
    <name type="scientific">Thermostichus vulcanus</name>
    <name type="common">Synechococcus vulcanus</name>
    <dbReference type="NCBI Taxonomy" id="32053"/>
    <lineage>
        <taxon>Bacteria</taxon>
        <taxon>Bacillati</taxon>
        <taxon>Cyanobacteriota</taxon>
        <taxon>Cyanophyceae</taxon>
        <taxon>Thermostichales</taxon>
        <taxon>Thermostichaceae</taxon>
        <taxon>Thermostichus</taxon>
    </lineage>
</organism>
<name>PSAE_THEVL</name>
<comment type="function">
    <text evidence="1">Stabilizes the interaction between PsaC and the PSI core, assists the docking of the ferredoxin to PSI and interacts with ferredoxin-NADP oxidoreductase.</text>
</comment>
<comment type="subcellular location">
    <subcellularLocation>
        <location evidence="1">Cellular thylakoid membrane</location>
        <topology evidence="1">Peripheral membrane protein</topology>
    </subcellularLocation>
</comment>
<comment type="similarity">
    <text evidence="2">Belongs to the PsaE family.</text>
</comment>
<feature type="chain" id="PRO_0000204413" description="Photosystem I reaction center subunit IV">
    <location>
        <begin position="1"/>
        <end position="26" status="greater than"/>
    </location>
</feature>
<feature type="non-terminal residue">
    <location>
        <position position="26"/>
    </location>
</feature>
<gene>
    <name type="primary">psaE</name>
</gene>
<protein>
    <recommendedName>
        <fullName>Photosystem I reaction center subunit IV</fullName>
    </recommendedName>
    <alternativeName>
        <fullName>Photosystem I 8.1 kDa protein</fullName>
    </alternativeName>
    <alternativeName>
        <fullName>p30 protein</fullName>
    </alternativeName>
</protein>
<keyword id="KW-0903">Direct protein sequencing</keyword>
<keyword id="KW-0472">Membrane</keyword>
<keyword id="KW-0602">Photosynthesis</keyword>
<keyword id="KW-0603">Photosystem I</keyword>
<keyword id="KW-0793">Thylakoid</keyword>